<organism>
    <name type="scientific">Arabidopsis thaliana</name>
    <name type="common">Mouse-ear cress</name>
    <dbReference type="NCBI Taxonomy" id="3702"/>
    <lineage>
        <taxon>Eukaryota</taxon>
        <taxon>Viridiplantae</taxon>
        <taxon>Streptophyta</taxon>
        <taxon>Embryophyta</taxon>
        <taxon>Tracheophyta</taxon>
        <taxon>Spermatophyta</taxon>
        <taxon>Magnoliopsida</taxon>
        <taxon>eudicotyledons</taxon>
        <taxon>Gunneridae</taxon>
        <taxon>Pentapetalae</taxon>
        <taxon>rosids</taxon>
        <taxon>malvids</taxon>
        <taxon>Brassicales</taxon>
        <taxon>Brassicaceae</taxon>
        <taxon>Camelineae</taxon>
        <taxon>Arabidopsis</taxon>
    </lineage>
</organism>
<evidence type="ECO:0000255" key="1">
    <source>
        <dbReference type="PROSITE-ProRule" id="PRU00080"/>
    </source>
</evidence>
<evidence type="ECO:0000256" key="2">
    <source>
        <dbReference type="SAM" id="MobiDB-lite"/>
    </source>
</evidence>
<evidence type="ECO:0000269" key="3">
    <source>
    </source>
</evidence>
<evidence type="ECO:0000303" key="4">
    <source>
    </source>
</evidence>
<evidence type="ECO:0000305" key="5"/>
<evidence type="ECO:0000312" key="6">
    <source>
        <dbReference type="Araport" id="AT2G18280"/>
    </source>
</evidence>
<evidence type="ECO:0000312" key="7">
    <source>
        <dbReference type="EMBL" id="AAD15508.1"/>
    </source>
</evidence>
<reference key="1">
    <citation type="journal article" date="2004" name="Plant Physiol.">
        <title>Molecular analyses of the Arabidopsis TUBBY-like protein gene family.</title>
        <authorList>
            <person name="Lai C.-P."/>
            <person name="Lee C.-L."/>
            <person name="Chen P.-H."/>
            <person name="Wu S.-H."/>
            <person name="Yang C.-C."/>
            <person name="Shaw J.-F."/>
        </authorList>
    </citation>
    <scope>NUCLEOTIDE SEQUENCE [MRNA]</scope>
    <scope>TISSUE SPECIFICITY</scope>
    <scope>GENE FAMILY</scope>
    <scope>NOMENCLATURE</scope>
</reference>
<reference key="2">
    <citation type="journal article" date="1999" name="Nature">
        <title>Sequence and analysis of chromosome 2 of the plant Arabidopsis thaliana.</title>
        <authorList>
            <person name="Lin X."/>
            <person name="Kaul S."/>
            <person name="Rounsley S.D."/>
            <person name="Shea T.P."/>
            <person name="Benito M.-I."/>
            <person name="Town C.D."/>
            <person name="Fujii C.Y."/>
            <person name="Mason T.M."/>
            <person name="Bowman C.L."/>
            <person name="Barnstead M.E."/>
            <person name="Feldblyum T.V."/>
            <person name="Buell C.R."/>
            <person name="Ketchum K.A."/>
            <person name="Lee J.J."/>
            <person name="Ronning C.M."/>
            <person name="Koo H.L."/>
            <person name="Moffat K.S."/>
            <person name="Cronin L.A."/>
            <person name="Shen M."/>
            <person name="Pai G."/>
            <person name="Van Aken S."/>
            <person name="Umayam L."/>
            <person name="Tallon L.J."/>
            <person name="Gill J.E."/>
            <person name="Adams M.D."/>
            <person name="Carrera A.J."/>
            <person name="Creasy T.H."/>
            <person name="Goodman H.M."/>
            <person name="Somerville C.R."/>
            <person name="Copenhaver G.P."/>
            <person name="Preuss D."/>
            <person name="Nierman W.C."/>
            <person name="White O."/>
            <person name="Eisen J.A."/>
            <person name="Salzberg S.L."/>
            <person name="Fraser C.M."/>
            <person name="Venter J.C."/>
        </authorList>
    </citation>
    <scope>NUCLEOTIDE SEQUENCE [LARGE SCALE GENOMIC DNA]</scope>
    <source>
        <strain>cv. Columbia</strain>
    </source>
</reference>
<reference key="3">
    <citation type="journal article" date="2017" name="Plant J.">
        <title>Araport11: a complete reannotation of the Arabidopsis thaliana reference genome.</title>
        <authorList>
            <person name="Cheng C.Y."/>
            <person name="Krishnakumar V."/>
            <person name="Chan A.P."/>
            <person name="Thibaud-Nissen F."/>
            <person name="Schobel S."/>
            <person name="Town C.D."/>
        </authorList>
    </citation>
    <scope>GENOME REANNOTATION</scope>
    <source>
        <strain>cv. Columbia</strain>
    </source>
</reference>
<reference key="4">
    <citation type="journal article" date="2003" name="Science">
        <title>Empirical analysis of transcriptional activity in the Arabidopsis genome.</title>
        <authorList>
            <person name="Yamada K."/>
            <person name="Lim J."/>
            <person name="Dale J.M."/>
            <person name="Chen H."/>
            <person name="Shinn P."/>
            <person name="Palm C.J."/>
            <person name="Southwick A.M."/>
            <person name="Wu H.C."/>
            <person name="Kim C.J."/>
            <person name="Nguyen M."/>
            <person name="Pham P.K."/>
            <person name="Cheuk R.F."/>
            <person name="Karlin-Newmann G."/>
            <person name="Liu S.X."/>
            <person name="Lam B."/>
            <person name="Sakano H."/>
            <person name="Wu T."/>
            <person name="Yu G."/>
            <person name="Miranda M."/>
            <person name="Quach H.L."/>
            <person name="Tripp M."/>
            <person name="Chang C.H."/>
            <person name="Lee J.M."/>
            <person name="Toriumi M.J."/>
            <person name="Chan M.M."/>
            <person name="Tang C.C."/>
            <person name="Onodera C.S."/>
            <person name="Deng J.M."/>
            <person name="Akiyama K."/>
            <person name="Ansari Y."/>
            <person name="Arakawa T."/>
            <person name="Banh J."/>
            <person name="Banno F."/>
            <person name="Bowser L."/>
            <person name="Brooks S.Y."/>
            <person name="Carninci P."/>
            <person name="Chao Q."/>
            <person name="Choy N."/>
            <person name="Enju A."/>
            <person name="Goldsmith A.D."/>
            <person name="Gurjal M."/>
            <person name="Hansen N.F."/>
            <person name="Hayashizaki Y."/>
            <person name="Johnson-Hopson C."/>
            <person name="Hsuan V.W."/>
            <person name="Iida K."/>
            <person name="Karnes M."/>
            <person name="Khan S."/>
            <person name="Koesema E."/>
            <person name="Ishida J."/>
            <person name="Jiang P.X."/>
            <person name="Jones T."/>
            <person name="Kawai J."/>
            <person name="Kamiya A."/>
            <person name="Meyers C."/>
            <person name="Nakajima M."/>
            <person name="Narusaka M."/>
            <person name="Seki M."/>
            <person name="Sakurai T."/>
            <person name="Satou M."/>
            <person name="Tamse R."/>
            <person name="Vaysberg M."/>
            <person name="Wallender E.K."/>
            <person name="Wong C."/>
            <person name="Yamamura Y."/>
            <person name="Yuan S."/>
            <person name="Shinozaki K."/>
            <person name="Davis R.W."/>
            <person name="Theologis A."/>
            <person name="Ecker J.R."/>
        </authorList>
    </citation>
    <scope>NUCLEOTIDE SEQUENCE [LARGE SCALE MRNA]</scope>
    <source>
        <strain>cv. Columbia</strain>
    </source>
</reference>
<reference key="5">
    <citation type="submission" date="2006-05" db="EMBL/GenBank/DDBJ databases">
        <title>Arabidopsis ORF clones.</title>
        <authorList>
            <person name="Shinn P."/>
            <person name="Chen H."/>
            <person name="Kim C.J."/>
            <person name="Quinitio C."/>
            <person name="Ecker J.R."/>
        </authorList>
    </citation>
    <scope>NUCLEOTIDE SEQUENCE [LARGE SCALE MRNA]</scope>
    <source>
        <strain>cv. Columbia</strain>
    </source>
</reference>
<comment type="tissue specificity">
    <text evidence="3">Ubiquitous.</text>
</comment>
<comment type="similarity">
    <text evidence="5">Belongs to the TUB family.</text>
</comment>
<comment type="sequence caution" evidence="5">
    <conflict type="erroneous gene model prediction">
        <sequence resource="EMBL-CDS" id="AAD15508"/>
    </conflict>
</comment>
<protein>
    <recommendedName>
        <fullName evidence="4">Tubby-like F-box protein 2</fullName>
        <shortName evidence="4">AtTLP2</shortName>
    </recommendedName>
</protein>
<name>TLP2_ARATH</name>
<dbReference type="EMBL" id="AY045773">
    <property type="protein sequence ID" value="AAK98801.1"/>
    <property type="molecule type" value="mRNA"/>
</dbReference>
<dbReference type="EMBL" id="AC006439">
    <property type="protein sequence ID" value="AAD15508.1"/>
    <property type="status" value="ALT_SEQ"/>
    <property type="molecule type" value="Genomic_DNA"/>
</dbReference>
<dbReference type="EMBL" id="CP002685">
    <property type="protein sequence ID" value="AEC06748.1"/>
    <property type="molecule type" value="Genomic_DNA"/>
</dbReference>
<dbReference type="EMBL" id="CP002685">
    <property type="protein sequence ID" value="AEC06749.1"/>
    <property type="molecule type" value="Genomic_DNA"/>
</dbReference>
<dbReference type="EMBL" id="BT008627">
    <property type="protein sequence ID" value="AAP40448.1"/>
    <property type="molecule type" value="mRNA"/>
</dbReference>
<dbReference type="EMBL" id="BT025314">
    <property type="protein sequence ID" value="ABF47130.1"/>
    <property type="molecule type" value="mRNA"/>
</dbReference>
<dbReference type="PIR" id="E84562">
    <property type="entry name" value="E84562"/>
</dbReference>
<dbReference type="RefSeq" id="NP_001031369.1">
    <property type="nucleotide sequence ID" value="NM_001036292.2"/>
</dbReference>
<dbReference type="RefSeq" id="NP_849975.1">
    <property type="nucleotide sequence ID" value="NM_179644.2"/>
</dbReference>
<dbReference type="SMR" id="Q8GVE5"/>
<dbReference type="BioGRID" id="1701">
    <property type="interactions" value="5"/>
</dbReference>
<dbReference type="FunCoup" id="Q8GVE5">
    <property type="interactions" value="508"/>
</dbReference>
<dbReference type="IntAct" id="Q8GVE5">
    <property type="interactions" value="2"/>
</dbReference>
<dbReference type="STRING" id="3702.Q8GVE5"/>
<dbReference type="iPTMnet" id="Q8GVE5"/>
<dbReference type="PaxDb" id="3702-AT2G18280.2"/>
<dbReference type="EnsemblPlants" id="AT2G18280.1">
    <property type="protein sequence ID" value="AT2G18280.1"/>
    <property type="gene ID" value="AT2G18280"/>
</dbReference>
<dbReference type="EnsemblPlants" id="AT2G18280.2">
    <property type="protein sequence ID" value="AT2G18280.2"/>
    <property type="gene ID" value="AT2G18280"/>
</dbReference>
<dbReference type="GeneID" id="816344"/>
<dbReference type="Gramene" id="AT2G18280.1">
    <property type="protein sequence ID" value="AT2G18280.1"/>
    <property type="gene ID" value="AT2G18280"/>
</dbReference>
<dbReference type="Gramene" id="AT2G18280.2">
    <property type="protein sequence ID" value="AT2G18280.2"/>
    <property type="gene ID" value="AT2G18280"/>
</dbReference>
<dbReference type="KEGG" id="ath:AT2G18280"/>
<dbReference type="Araport" id="AT2G18280"/>
<dbReference type="TAIR" id="AT2G18280">
    <property type="gene designation" value="TLP2"/>
</dbReference>
<dbReference type="eggNOG" id="KOG2502">
    <property type="taxonomic scope" value="Eukaryota"/>
</dbReference>
<dbReference type="HOGENOM" id="CLU_028236_3_0_1"/>
<dbReference type="InParanoid" id="Q8GVE5"/>
<dbReference type="OMA" id="EAFQANH"/>
<dbReference type="PhylomeDB" id="Q8GVE5"/>
<dbReference type="PRO" id="PR:Q8GVE5"/>
<dbReference type="Proteomes" id="UP000006548">
    <property type="component" value="Chromosome 2"/>
</dbReference>
<dbReference type="ExpressionAtlas" id="Q8GVE5">
    <property type="expression patterns" value="baseline and differential"/>
</dbReference>
<dbReference type="GO" id="GO:0005829">
    <property type="term" value="C:cytosol"/>
    <property type="evidence" value="ECO:0000314"/>
    <property type="project" value="TAIR"/>
</dbReference>
<dbReference type="GO" id="GO:0005634">
    <property type="term" value="C:nucleus"/>
    <property type="evidence" value="ECO:0000314"/>
    <property type="project" value="TAIR"/>
</dbReference>
<dbReference type="GO" id="GO:0005886">
    <property type="term" value="C:plasma membrane"/>
    <property type="evidence" value="ECO:0000314"/>
    <property type="project" value="TAIR"/>
</dbReference>
<dbReference type="GO" id="GO:0009536">
    <property type="term" value="C:plastid"/>
    <property type="evidence" value="ECO:0000314"/>
    <property type="project" value="TAIR"/>
</dbReference>
<dbReference type="GO" id="GO:0000976">
    <property type="term" value="F:transcription cis-regulatory region binding"/>
    <property type="evidence" value="ECO:0000353"/>
    <property type="project" value="TAIR"/>
</dbReference>
<dbReference type="GO" id="GO:0006355">
    <property type="term" value="P:regulation of DNA-templated transcription"/>
    <property type="evidence" value="ECO:0000304"/>
    <property type="project" value="TAIR"/>
</dbReference>
<dbReference type="GO" id="GO:0009620">
    <property type="term" value="P:response to fungus"/>
    <property type="evidence" value="ECO:0000315"/>
    <property type="project" value="TAIR"/>
</dbReference>
<dbReference type="CDD" id="cd22153">
    <property type="entry name" value="F-box_AtTLP-like"/>
    <property type="match status" value="1"/>
</dbReference>
<dbReference type="FunFam" id="3.20.90.10:FF:000003">
    <property type="entry name" value="Tubby-like F-box protein"/>
    <property type="match status" value="1"/>
</dbReference>
<dbReference type="Gene3D" id="1.20.1280.50">
    <property type="match status" value="1"/>
</dbReference>
<dbReference type="Gene3D" id="3.20.90.10">
    <property type="entry name" value="Tubby Protein, Chain A"/>
    <property type="match status" value="1"/>
</dbReference>
<dbReference type="InterPro" id="IPR036047">
    <property type="entry name" value="F-box-like_dom_sf"/>
</dbReference>
<dbReference type="InterPro" id="IPR025659">
    <property type="entry name" value="Tubby-like_C"/>
</dbReference>
<dbReference type="InterPro" id="IPR000007">
    <property type="entry name" value="Tubby_C"/>
</dbReference>
<dbReference type="InterPro" id="IPR018066">
    <property type="entry name" value="Tubby_C_CS"/>
</dbReference>
<dbReference type="PANTHER" id="PTHR16517:SF134">
    <property type="entry name" value="TUBBY-LIKE F-BOX PROTEIN 2"/>
    <property type="match status" value="1"/>
</dbReference>
<dbReference type="PANTHER" id="PTHR16517">
    <property type="entry name" value="TUBBY-RELATED"/>
    <property type="match status" value="1"/>
</dbReference>
<dbReference type="Pfam" id="PF01167">
    <property type="entry name" value="Tub"/>
    <property type="match status" value="1"/>
</dbReference>
<dbReference type="PRINTS" id="PR01573">
    <property type="entry name" value="SUPERTUBBY"/>
</dbReference>
<dbReference type="SUPFAM" id="SSF81383">
    <property type="entry name" value="F-box domain"/>
    <property type="match status" value="1"/>
</dbReference>
<dbReference type="SUPFAM" id="SSF54518">
    <property type="entry name" value="Tubby C-terminal domain-like"/>
    <property type="match status" value="1"/>
</dbReference>
<dbReference type="PROSITE" id="PS01200">
    <property type="entry name" value="TUB_1"/>
    <property type="match status" value="1"/>
</dbReference>
<dbReference type="PROSITE" id="PS01201">
    <property type="entry name" value="TUB_2"/>
    <property type="match status" value="1"/>
</dbReference>
<keyword id="KW-1185">Reference proteome</keyword>
<feature type="chain" id="PRO_0000272230" description="Tubby-like F-box protein 2">
    <location>
        <begin position="1"/>
        <end position="394"/>
    </location>
</feature>
<feature type="domain" description="F-box" evidence="1">
    <location>
        <begin position="46"/>
        <end position="101"/>
    </location>
</feature>
<feature type="region of interest" description="Disordered" evidence="2">
    <location>
        <begin position="21"/>
        <end position="44"/>
    </location>
</feature>
<feature type="region of interest" description="Disordered" evidence="2">
    <location>
        <begin position="200"/>
        <end position="225"/>
    </location>
</feature>
<feature type="region of interest" description="Disordered" evidence="2">
    <location>
        <begin position="268"/>
        <end position="297"/>
    </location>
</feature>
<feature type="compositionally biased region" description="Polar residues" evidence="2">
    <location>
        <begin position="26"/>
        <end position="44"/>
    </location>
</feature>
<feature type="sequence conflict" description="In Ref. 4; AAP40448." evidence="5" ref="4">
    <original>G</original>
    <variation>V</variation>
    <location>
        <position position="358"/>
    </location>
</feature>
<accession>Q8GVE5</accession>
<accession>Q7Y213</accession>
<accession>Q9ZPW1</accession>
<proteinExistence type="evidence at transcript level"/>
<gene>
    <name evidence="5" type="primary">TULP2</name>
    <name evidence="4" type="synonym">TLP2</name>
    <name evidence="6" type="ordered locus">At2g18280</name>
    <name evidence="7" type="ORF">T30D6.21</name>
</gene>
<sequence>MSLKSILRDLKEVRDGLGGISKRSWSKSSHIAPDQTTPPLDNIPQSPWASLPPELLHDIIWRVEESETAWPARAAVVSCASVCKSWRGITMEIVRIPEQCGKLTFPISLKQPGPRDSPIQCFIKRNRATATYILYYGLMPSETENDKLLLAARRIRRATCTDFIISLSAKNFSRSSSTYVGKLRSGFLGTKFTIYDNQTASSTAQAQPNRRLHPKQAAPKLPTNSSTVGNITYELNVLRTRGPRRMHCAMDSIPLSSVIAEPSVVQGIEEEVSSSPSPKGETITTDKEIPDNSPSLRDQPLVLKNKSPRWHEQLQCWCLNFKGRVTVASVKNFQLVAEIDASLDAPPEEHERVILQFGKIGKDIFTMDYRYPLSAFQAFAICISSFDTKPACEG</sequence>